<accession>A3M294</accession>
<reference key="1">
    <citation type="journal article" date="2007" name="Genes Dev.">
        <title>New insights into Acinetobacter baumannii pathogenesis revealed by high-density pyrosequencing and transposon mutagenesis.</title>
        <authorList>
            <person name="Smith M.G."/>
            <person name="Gianoulis T.A."/>
            <person name="Pukatzki S."/>
            <person name="Mekalanos J.J."/>
            <person name="Ornston L.N."/>
            <person name="Gerstein M."/>
            <person name="Snyder M."/>
        </authorList>
    </citation>
    <scope>NUCLEOTIDE SEQUENCE [LARGE SCALE GENOMIC DNA]</scope>
    <source>
        <strain>ATCC 17978 / DSM 105126 / CIP 53.77 / LMG 1025 / NCDC KC755 / 5377</strain>
    </source>
</reference>
<protein>
    <recommendedName>
        <fullName evidence="1">Pantothenate synthetase</fullName>
        <shortName evidence="1">PS</shortName>
        <ecNumber evidence="1">6.3.2.1</ecNumber>
    </recommendedName>
    <alternativeName>
        <fullName evidence="1">Pantoate--beta-alanine ligase</fullName>
    </alternativeName>
    <alternativeName>
        <fullName evidence="1">Pantoate-activating enzyme</fullName>
    </alternativeName>
</protein>
<comment type="function">
    <text evidence="1">Catalyzes the condensation of pantoate with beta-alanine in an ATP-dependent reaction via a pantoyl-adenylate intermediate.</text>
</comment>
<comment type="catalytic activity">
    <reaction evidence="1">
        <text>(R)-pantoate + beta-alanine + ATP = (R)-pantothenate + AMP + diphosphate + H(+)</text>
        <dbReference type="Rhea" id="RHEA:10912"/>
        <dbReference type="ChEBI" id="CHEBI:15378"/>
        <dbReference type="ChEBI" id="CHEBI:15980"/>
        <dbReference type="ChEBI" id="CHEBI:29032"/>
        <dbReference type="ChEBI" id="CHEBI:30616"/>
        <dbReference type="ChEBI" id="CHEBI:33019"/>
        <dbReference type="ChEBI" id="CHEBI:57966"/>
        <dbReference type="ChEBI" id="CHEBI:456215"/>
        <dbReference type="EC" id="6.3.2.1"/>
    </reaction>
</comment>
<comment type="pathway">
    <text evidence="1">Cofactor biosynthesis; (R)-pantothenate biosynthesis; (R)-pantothenate from (R)-pantoate and beta-alanine: step 1/1.</text>
</comment>
<comment type="subunit">
    <text evidence="1">Homodimer.</text>
</comment>
<comment type="subcellular location">
    <subcellularLocation>
        <location evidence="1">Cytoplasm</location>
    </subcellularLocation>
</comment>
<comment type="miscellaneous">
    <text evidence="1">The reaction proceeds by a bi uni uni bi ping pong mechanism.</text>
</comment>
<comment type="similarity">
    <text evidence="1">Belongs to the pantothenate synthetase family.</text>
</comment>
<gene>
    <name evidence="1" type="primary">panC</name>
    <name type="ordered locus">A1S_0587</name>
</gene>
<keyword id="KW-0067">ATP-binding</keyword>
<keyword id="KW-0963">Cytoplasm</keyword>
<keyword id="KW-0436">Ligase</keyword>
<keyword id="KW-0547">Nucleotide-binding</keyword>
<keyword id="KW-0566">Pantothenate biosynthesis</keyword>
<dbReference type="EC" id="6.3.2.1" evidence="1"/>
<dbReference type="EMBL" id="CP000521">
    <property type="protein sequence ID" value="ABO11038.2"/>
    <property type="molecule type" value="Genomic_DNA"/>
</dbReference>
<dbReference type="RefSeq" id="WP_000846362.1">
    <property type="nucleotide sequence ID" value="NZ_CP053098.1"/>
</dbReference>
<dbReference type="SMR" id="A3M294"/>
<dbReference type="GeneID" id="92892565"/>
<dbReference type="KEGG" id="acb:A1S_0587"/>
<dbReference type="HOGENOM" id="CLU_047148_0_0_6"/>
<dbReference type="UniPathway" id="UPA00028">
    <property type="reaction ID" value="UER00005"/>
</dbReference>
<dbReference type="GO" id="GO:0005829">
    <property type="term" value="C:cytosol"/>
    <property type="evidence" value="ECO:0007669"/>
    <property type="project" value="TreeGrafter"/>
</dbReference>
<dbReference type="GO" id="GO:0005524">
    <property type="term" value="F:ATP binding"/>
    <property type="evidence" value="ECO:0007669"/>
    <property type="project" value="UniProtKB-KW"/>
</dbReference>
<dbReference type="GO" id="GO:0004592">
    <property type="term" value="F:pantoate-beta-alanine ligase activity"/>
    <property type="evidence" value="ECO:0007669"/>
    <property type="project" value="UniProtKB-UniRule"/>
</dbReference>
<dbReference type="GO" id="GO:0015940">
    <property type="term" value="P:pantothenate biosynthetic process"/>
    <property type="evidence" value="ECO:0007669"/>
    <property type="project" value="UniProtKB-UniRule"/>
</dbReference>
<dbReference type="CDD" id="cd00560">
    <property type="entry name" value="PanC"/>
    <property type="match status" value="1"/>
</dbReference>
<dbReference type="FunFam" id="3.40.50.620:FF:000013">
    <property type="entry name" value="Pantothenate synthetase"/>
    <property type="match status" value="1"/>
</dbReference>
<dbReference type="Gene3D" id="3.40.50.620">
    <property type="entry name" value="HUPs"/>
    <property type="match status" value="1"/>
</dbReference>
<dbReference type="Gene3D" id="3.30.1300.10">
    <property type="entry name" value="Pantoate-beta-alanine ligase, C-terminal domain"/>
    <property type="match status" value="1"/>
</dbReference>
<dbReference type="HAMAP" id="MF_00158">
    <property type="entry name" value="PanC"/>
    <property type="match status" value="1"/>
</dbReference>
<dbReference type="InterPro" id="IPR004821">
    <property type="entry name" value="Cyt_trans-like"/>
</dbReference>
<dbReference type="InterPro" id="IPR003721">
    <property type="entry name" value="Pantoate_ligase"/>
</dbReference>
<dbReference type="InterPro" id="IPR042176">
    <property type="entry name" value="Pantoate_ligase_C"/>
</dbReference>
<dbReference type="InterPro" id="IPR014729">
    <property type="entry name" value="Rossmann-like_a/b/a_fold"/>
</dbReference>
<dbReference type="NCBIfam" id="TIGR00125">
    <property type="entry name" value="cyt_tran_rel"/>
    <property type="match status" value="1"/>
</dbReference>
<dbReference type="NCBIfam" id="TIGR00018">
    <property type="entry name" value="panC"/>
    <property type="match status" value="1"/>
</dbReference>
<dbReference type="PANTHER" id="PTHR21299">
    <property type="entry name" value="CYTIDYLATE KINASE/PANTOATE-BETA-ALANINE LIGASE"/>
    <property type="match status" value="1"/>
</dbReference>
<dbReference type="PANTHER" id="PTHR21299:SF1">
    <property type="entry name" value="PANTOATE--BETA-ALANINE LIGASE"/>
    <property type="match status" value="1"/>
</dbReference>
<dbReference type="Pfam" id="PF02569">
    <property type="entry name" value="Pantoate_ligase"/>
    <property type="match status" value="1"/>
</dbReference>
<dbReference type="SUPFAM" id="SSF52374">
    <property type="entry name" value="Nucleotidylyl transferase"/>
    <property type="match status" value="1"/>
</dbReference>
<feature type="chain" id="PRO_0000305385" description="Pantothenate synthetase">
    <location>
        <begin position="1"/>
        <end position="282"/>
    </location>
</feature>
<feature type="active site" description="Proton donor" evidence="1">
    <location>
        <position position="37"/>
    </location>
</feature>
<feature type="binding site" evidence="1">
    <location>
        <begin position="30"/>
        <end position="37"/>
    </location>
    <ligand>
        <name>ATP</name>
        <dbReference type="ChEBI" id="CHEBI:30616"/>
    </ligand>
</feature>
<feature type="binding site" evidence="1">
    <location>
        <position position="61"/>
    </location>
    <ligand>
        <name>(R)-pantoate</name>
        <dbReference type="ChEBI" id="CHEBI:15980"/>
    </ligand>
</feature>
<feature type="binding site" evidence="1">
    <location>
        <position position="61"/>
    </location>
    <ligand>
        <name>beta-alanine</name>
        <dbReference type="ChEBI" id="CHEBI:57966"/>
    </ligand>
</feature>
<feature type="binding site" evidence="1">
    <location>
        <begin position="148"/>
        <end position="151"/>
    </location>
    <ligand>
        <name>ATP</name>
        <dbReference type="ChEBI" id="CHEBI:30616"/>
    </ligand>
</feature>
<feature type="binding site" evidence="1">
    <location>
        <position position="154"/>
    </location>
    <ligand>
        <name>(R)-pantoate</name>
        <dbReference type="ChEBI" id="CHEBI:15980"/>
    </ligand>
</feature>
<feature type="binding site" evidence="1">
    <location>
        <position position="177"/>
    </location>
    <ligand>
        <name>ATP</name>
        <dbReference type="ChEBI" id="CHEBI:30616"/>
    </ligand>
</feature>
<feature type="binding site" evidence="1">
    <location>
        <begin position="185"/>
        <end position="188"/>
    </location>
    <ligand>
        <name>ATP</name>
        <dbReference type="ChEBI" id="CHEBI:30616"/>
    </ligand>
</feature>
<evidence type="ECO:0000255" key="1">
    <source>
        <dbReference type="HAMAP-Rule" id="MF_00158"/>
    </source>
</evidence>
<organism>
    <name type="scientific">Acinetobacter baumannii (strain ATCC 17978 / DSM 105126 / CIP 53.77 / LMG 1025 / NCDC KC755 / 5377)</name>
    <dbReference type="NCBI Taxonomy" id="400667"/>
    <lineage>
        <taxon>Bacteria</taxon>
        <taxon>Pseudomonadati</taxon>
        <taxon>Pseudomonadota</taxon>
        <taxon>Gammaproteobacteria</taxon>
        <taxon>Moraxellales</taxon>
        <taxon>Moraxellaceae</taxon>
        <taxon>Acinetobacter</taxon>
        <taxon>Acinetobacter calcoaceticus/baumannii complex</taxon>
    </lineage>
</organism>
<proteinExistence type="inferred from homology"/>
<sequence>MKTETTIQGLAASLNPARAARKIIGFVPTMGNLHEGHLTLVREAKKLCDVVVVSIFVNPTQFGPGEDFDNYPRTLEQDSRLLADVGCDIIFAPSVEQMYGTQPRLTNISVSQITDDLCGSSRPGHFDGVALVVTKLFNIVQPNYAFFGQKDYQQLAVIRQFVQDLNIPLEVIGVPIVRAEDGLALSSRNGYLTPEQRQVAPVIYQGLKQAEEQLHQGKDLQQVLADLKTLLTDNGFVVDYVEARQPNLLAASQFDRDIVLFVAAKLGGTRLIDNLQVAFTPQ</sequence>
<name>PANC_ACIBT</name>